<proteinExistence type="predicted"/>
<feature type="chain" id="PRO_0000106154" description="Putative gene 48 protein">
    <location>
        <begin position="1"/>
        <end position="126"/>
    </location>
</feature>
<gene>
    <name type="primary">48</name>
</gene>
<name>GP48_BPSP1</name>
<protein>
    <recommendedName>
        <fullName>Putative gene 48 protein</fullName>
    </recommendedName>
</protein>
<sequence length="126" mass="14349">MPYSKITVPVLVGEGLTEWDVIDVMRETHPPTVEDQYHYHTFDSMQNRTIFVLENPLYPDVDKIPEKVLGIAVDALEDMLDNVPVEDLPVTEEQGNVKRFTTKLASIVFDVFLIIPDFVSVTAKEE</sequence>
<organism>
    <name type="scientific">Bacillus phage SP01</name>
    <name type="common">Bacteriophage SP01</name>
    <dbReference type="NCBI Taxonomy" id="2884427"/>
    <lineage>
        <taxon>Viruses</taxon>
        <taxon>Duplodnaviria</taxon>
        <taxon>Heunggongvirae</taxon>
        <taxon>Uroviricota</taxon>
        <taxon>Caudoviricetes</taxon>
        <taxon>Herelleviridae</taxon>
        <taxon>Spounavirinae</taxon>
        <taxon>Okubovirus</taxon>
        <taxon>Okubovirus SPO1</taxon>
    </lineage>
</organism>
<dbReference type="EMBL" id="AF031901">
    <property type="protein sequence ID" value="AAC29017.1"/>
    <property type="molecule type" value="Genomic_DNA"/>
</dbReference>
<dbReference type="RefSeq" id="YP_002300292.1">
    <property type="nucleotide sequence ID" value="NC_011421.1"/>
</dbReference>
<dbReference type="GeneID" id="7009005"/>
<dbReference type="KEGG" id="vg:7009005"/>
<organismHost>
    <name type="scientific">Bacillus subtilis</name>
    <dbReference type="NCBI Taxonomy" id="1423"/>
</organismHost>
<reference key="1">
    <citation type="journal article" date="1998" name="Virology">
        <title>Genes and regulatory sites of the 'host-takeover module' in the terminal redundancy of Bacillus subtilis bacteriophage SPO1.</title>
        <authorList>
            <person name="Stewart C.R."/>
            <person name="Gaslightwala I."/>
            <person name="Hinata K."/>
            <person name="Krolikowski K.A."/>
            <person name="Needleman D.S."/>
            <person name="Peng A.S.-Y."/>
            <person name="Peterman M.A."/>
            <person name="Tobias A."/>
            <person name="Wei P."/>
        </authorList>
    </citation>
    <scope>NUCLEOTIDE SEQUENCE [GENOMIC DNA]</scope>
</reference>
<accession>O48402</accession>